<sequence length="135" mass="15385">MLSPKRTRFRKQHRGRMKGISSRGNRICFGRYALQALEPAWITSRQIEAGRRAMTRNVRRGGKIWVRIFPDKPVTLRPSETRMGSGKGSPEYWVAVVKPGRMIYEMGGVAENIAKKAISIAASKMPIRTQFIILR</sequence>
<proteinExistence type="inferred from homology"/>
<organism>
    <name type="scientific">Populus alba</name>
    <name type="common">White poplar</name>
    <dbReference type="NCBI Taxonomy" id="43335"/>
    <lineage>
        <taxon>Eukaryota</taxon>
        <taxon>Viridiplantae</taxon>
        <taxon>Streptophyta</taxon>
        <taxon>Embryophyta</taxon>
        <taxon>Tracheophyta</taxon>
        <taxon>Spermatophyta</taxon>
        <taxon>Magnoliopsida</taxon>
        <taxon>eudicotyledons</taxon>
        <taxon>Gunneridae</taxon>
        <taxon>Pentapetalae</taxon>
        <taxon>rosids</taxon>
        <taxon>fabids</taxon>
        <taxon>Malpighiales</taxon>
        <taxon>Salicaceae</taxon>
        <taxon>Saliceae</taxon>
        <taxon>Populus</taxon>
    </lineage>
</organism>
<name>RK16_POPAL</name>
<evidence type="ECO:0000255" key="1">
    <source>
        <dbReference type="HAMAP-Rule" id="MF_01342"/>
    </source>
</evidence>
<evidence type="ECO:0000305" key="2"/>
<keyword id="KW-0150">Chloroplast</keyword>
<keyword id="KW-0934">Plastid</keyword>
<keyword id="KW-0687">Ribonucleoprotein</keyword>
<keyword id="KW-0689">Ribosomal protein</keyword>
<comment type="subunit">
    <text evidence="1">Part of the 50S ribosomal subunit.</text>
</comment>
<comment type="subcellular location">
    <subcellularLocation>
        <location>Plastid</location>
        <location>Chloroplast</location>
    </subcellularLocation>
</comment>
<comment type="similarity">
    <text evidence="1">Belongs to the universal ribosomal protein uL16 family.</text>
</comment>
<protein>
    <recommendedName>
        <fullName evidence="1">Large ribosomal subunit protein uL16c</fullName>
    </recommendedName>
    <alternativeName>
        <fullName evidence="2">50S ribosomal protein L16, chloroplastic</fullName>
    </alternativeName>
</protein>
<dbReference type="EMBL" id="AP008956">
    <property type="protein sequence ID" value="BAE97242.1"/>
    <property type="molecule type" value="Genomic_DNA"/>
</dbReference>
<dbReference type="RefSeq" id="YP_665595.1">
    <property type="nucleotide sequence ID" value="NC_008235.1"/>
</dbReference>
<dbReference type="SMR" id="Q14FC0"/>
<dbReference type="GeneID" id="4178244"/>
<dbReference type="KEGG" id="palz:4178244"/>
<dbReference type="OrthoDB" id="13022at3646"/>
<dbReference type="GO" id="GO:0009507">
    <property type="term" value="C:chloroplast"/>
    <property type="evidence" value="ECO:0007669"/>
    <property type="project" value="UniProtKB-SubCell"/>
</dbReference>
<dbReference type="GO" id="GO:0005762">
    <property type="term" value="C:mitochondrial large ribosomal subunit"/>
    <property type="evidence" value="ECO:0007669"/>
    <property type="project" value="TreeGrafter"/>
</dbReference>
<dbReference type="GO" id="GO:0019843">
    <property type="term" value="F:rRNA binding"/>
    <property type="evidence" value="ECO:0007669"/>
    <property type="project" value="InterPro"/>
</dbReference>
<dbReference type="GO" id="GO:0003735">
    <property type="term" value="F:structural constituent of ribosome"/>
    <property type="evidence" value="ECO:0007669"/>
    <property type="project" value="InterPro"/>
</dbReference>
<dbReference type="GO" id="GO:0032543">
    <property type="term" value="P:mitochondrial translation"/>
    <property type="evidence" value="ECO:0007669"/>
    <property type="project" value="TreeGrafter"/>
</dbReference>
<dbReference type="CDD" id="cd01433">
    <property type="entry name" value="Ribosomal_L16_L10e"/>
    <property type="match status" value="1"/>
</dbReference>
<dbReference type="FunFam" id="3.90.1170.10:FF:000001">
    <property type="entry name" value="50S ribosomal protein L16"/>
    <property type="match status" value="1"/>
</dbReference>
<dbReference type="Gene3D" id="3.90.1170.10">
    <property type="entry name" value="Ribosomal protein L10e/L16"/>
    <property type="match status" value="1"/>
</dbReference>
<dbReference type="HAMAP" id="MF_01342">
    <property type="entry name" value="Ribosomal_uL16"/>
    <property type="match status" value="1"/>
</dbReference>
<dbReference type="InterPro" id="IPR047873">
    <property type="entry name" value="Ribosomal_uL16"/>
</dbReference>
<dbReference type="InterPro" id="IPR000114">
    <property type="entry name" value="Ribosomal_uL16_bact-type"/>
</dbReference>
<dbReference type="InterPro" id="IPR020798">
    <property type="entry name" value="Ribosomal_uL16_CS"/>
</dbReference>
<dbReference type="InterPro" id="IPR016180">
    <property type="entry name" value="Ribosomal_uL16_dom"/>
</dbReference>
<dbReference type="InterPro" id="IPR036920">
    <property type="entry name" value="Ribosomal_uL16_sf"/>
</dbReference>
<dbReference type="NCBIfam" id="TIGR01164">
    <property type="entry name" value="rplP_bact"/>
    <property type="match status" value="1"/>
</dbReference>
<dbReference type="PANTHER" id="PTHR12220">
    <property type="entry name" value="50S/60S RIBOSOMAL PROTEIN L16"/>
    <property type="match status" value="1"/>
</dbReference>
<dbReference type="PANTHER" id="PTHR12220:SF13">
    <property type="entry name" value="LARGE RIBOSOMAL SUBUNIT PROTEIN UL16M"/>
    <property type="match status" value="1"/>
</dbReference>
<dbReference type="Pfam" id="PF00252">
    <property type="entry name" value="Ribosomal_L16"/>
    <property type="match status" value="1"/>
</dbReference>
<dbReference type="PRINTS" id="PR00060">
    <property type="entry name" value="RIBOSOMALL16"/>
</dbReference>
<dbReference type="SUPFAM" id="SSF54686">
    <property type="entry name" value="Ribosomal protein L16p/L10e"/>
    <property type="match status" value="1"/>
</dbReference>
<dbReference type="PROSITE" id="PS00586">
    <property type="entry name" value="RIBOSOMAL_L16_1"/>
    <property type="match status" value="1"/>
</dbReference>
<dbReference type="PROSITE" id="PS00701">
    <property type="entry name" value="RIBOSOMAL_L16_2"/>
    <property type="match status" value="1"/>
</dbReference>
<geneLocation type="chloroplast"/>
<feature type="chain" id="PRO_0000251697" description="Large ribosomal subunit protein uL16c">
    <location>
        <begin position="1"/>
        <end position="135"/>
    </location>
</feature>
<accession>Q14FC0</accession>
<gene>
    <name evidence="1" type="primary">rpl16</name>
</gene>
<reference key="1">
    <citation type="submission" date="2005-03" db="EMBL/GenBank/DDBJ databases">
        <title>Complete structure of the chloroplast genome of Populus alba.</title>
        <authorList>
            <person name="Okumura S."/>
            <person name="Yamashita A."/>
            <person name="Kanamoto H."/>
            <person name="Hattori M."/>
            <person name="Takase H."/>
            <person name="Tomizawa K."/>
        </authorList>
    </citation>
    <scope>NUCLEOTIDE SEQUENCE [LARGE SCALE GENOMIC DNA]</scope>
</reference>